<organism>
    <name type="scientific">Verminephrobacter eiseniae (strain EF01-2)</name>
    <dbReference type="NCBI Taxonomy" id="391735"/>
    <lineage>
        <taxon>Bacteria</taxon>
        <taxon>Pseudomonadati</taxon>
        <taxon>Pseudomonadota</taxon>
        <taxon>Betaproteobacteria</taxon>
        <taxon>Burkholderiales</taxon>
        <taxon>Comamonadaceae</taxon>
        <taxon>Verminephrobacter</taxon>
    </lineage>
</organism>
<reference key="1">
    <citation type="submission" date="2006-12" db="EMBL/GenBank/DDBJ databases">
        <title>Complete sequence of chromosome 1 of Verminephrobacter eiseniae EF01-2.</title>
        <authorList>
            <person name="Copeland A."/>
            <person name="Lucas S."/>
            <person name="Lapidus A."/>
            <person name="Barry K."/>
            <person name="Detter J.C."/>
            <person name="Glavina del Rio T."/>
            <person name="Dalin E."/>
            <person name="Tice H."/>
            <person name="Pitluck S."/>
            <person name="Chertkov O."/>
            <person name="Brettin T."/>
            <person name="Bruce D."/>
            <person name="Han C."/>
            <person name="Tapia R."/>
            <person name="Gilna P."/>
            <person name="Schmutz J."/>
            <person name="Larimer F."/>
            <person name="Land M."/>
            <person name="Hauser L."/>
            <person name="Kyrpides N."/>
            <person name="Kim E."/>
            <person name="Stahl D."/>
            <person name="Richardson P."/>
        </authorList>
    </citation>
    <scope>NUCLEOTIDE SEQUENCE [LARGE SCALE GENOMIC DNA]</scope>
    <source>
        <strain>EF01-2</strain>
    </source>
</reference>
<comment type="function">
    <text evidence="1">F(1)F(0) ATP synthase produces ATP from ADP in the presence of a proton or sodium gradient. F-type ATPases consist of two structural domains, F(1) containing the extramembraneous catalytic core and F(0) containing the membrane proton channel, linked together by a central stalk and a peripheral stalk. During catalysis, ATP synthesis in the catalytic domain of F(1) is coupled via a rotary mechanism of the central stalk subunits to proton translocation.</text>
</comment>
<comment type="function">
    <text evidence="1">Component of the F(0) channel, it forms part of the peripheral stalk, linking F(1) to F(0).</text>
</comment>
<comment type="subunit">
    <text evidence="1">F-type ATPases have 2 components, F(1) - the catalytic core - and F(0) - the membrane proton channel. F(1) has five subunits: alpha(3), beta(3), gamma(1), delta(1), epsilon(1). F(0) has three main subunits: a(1), b(2) and c(10-14). The alpha and beta chains form an alternating ring which encloses part of the gamma chain. F(1) is attached to F(0) by a central stalk formed by the gamma and epsilon chains, while a peripheral stalk is formed by the delta and b chains.</text>
</comment>
<comment type="subcellular location">
    <subcellularLocation>
        <location evidence="1">Cell inner membrane</location>
        <topology evidence="1">Single-pass membrane protein</topology>
    </subcellularLocation>
</comment>
<comment type="similarity">
    <text evidence="1">Belongs to the ATPase B chain family.</text>
</comment>
<protein>
    <recommendedName>
        <fullName evidence="1">ATP synthase subunit b</fullName>
    </recommendedName>
    <alternativeName>
        <fullName evidence="1">ATP synthase F(0) sector subunit b</fullName>
    </alternativeName>
    <alternativeName>
        <fullName evidence="1">ATPase subunit I</fullName>
    </alternativeName>
    <alternativeName>
        <fullName evidence="1">F-type ATPase subunit b</fullName>
        <shortName evidence="1">F-ATPase subunit b</shortName>
    </alternativeName>
</protein>
<evidence type="ECO:0000255" key="1">
    <source>
        <dbReference type="HAMAP-Rule" id="MF_01398"/>
    </source>
</evidence>
<name>ATPF_VEREI</name>
<gene>
    <name evidence="1" type="primary">atpF</name>
    <name type="ordered locus">Veis_0476</name>
</gene>
<keyword id="KW-0066">ATP synthesis</keyword>
<keyword id="KW-0997">Cell inner membrane</keyword>
<keyword id="KW-1003">Cell membrane</keyword>
<keyword id="KW-0138">CF(0)</keyword>
<keyword id="KW-0375">Hydrogen ion transport</keyword>
<keyword id="KW-0406">Ion transport</keyword>
<keyword id="KW-0472">Membrane</keyword>
<keyword id="KW-1185">Reference proteome</keyword>
<keyword id="KW-0812">Transmembrane</keyword>
<keyword id="KW-1133">Transmembrane helix</keyword>
<keyword id="KW-0813">Transport</keyword>
<feature type="chain" id="PRO_0000368854" description="ATP synthase subunit b">
    <location>
        <begin position="1"/>
        <end position="156"/>
    </location>
</feature>
<feature type="transmembrane region" description="Helical" evidence="1">
    <location>
        <begin position="7"/>
        <end position="27"/>
    </location>
</feature>
<sequence length="156" mass="17084">MSINATLFVQAIVFLILVWFTMQFVWPPIAKALDERAQKIADGLAAADRAKSELSAANQRVEKELSQARNETAARLADAERRAQAIIEEAKARATEEGNKLVAAARAEAEQQMVQAREALRAQVAVLAVKGAEQILRKEVDAGVHAGLLRRLQTEL</sequence>
<dbReference type="EMBL" id="CP000542">
    <property type="protein sequence ID" value="ABM56261.1"/>
    <property type="molecule type" value="Genomic_DNA"/>
</dbReference>
<dbReference type="RefSeq" id="WP_011808277.1">
    <property type="nucleotide sequence ID" value="NC_008786.1"/>
</dbReference>
<dbReference type="SMR" id="A1WF54"/>
<dbReference type="STRING" id="391735.Veis_0476"/>
<dbReference type="GeneID" id="76459186"/>
<dbReference type="KEGG" id="vei:Veis_0476"/>
<dbReference type="eggNOG" id="COG0711">
    <property type="taxonomic scope" value="Bacteria"/>
</dbReference>
<dbReference type="HOGENOM" id="CLU_079215_4_5_4"/>
<dbReference type="OrthoDB" id="9788020at2"/>
<dbReference type="Proteomes" id="UP000000374">
    <property type="component" value="Chromosome"/>
</dbReference>
<dbReference type="GO" id="GO:0005886">
    <property type="term" value="C:plasma membrane"/>
    <property type="evidence" value="ECO:0007669"/>
    <property type="project" value="UniProtKB-SubCell"/>
</dbReference>
<dbReference type="GO" id="GO:0045259">
    <property type="term" value="C:proton-transporting ATP synthase complex"/>
    <property type="evidence" value="ECO:0007669"/>
    <property type="project" value="UniProtKB-KW"/>
</dbReference>
<dbReference type="GO" id="GO:0046933">
    <property type="term" value="F:proton-transporting ATP synthase activity, rotational mechanism"/>
    <property type="evidence" value="ECO:0007669"/>
    <property type="project" value="UniProtKB-UniRule"/>
</dbReference>
<dbReference type="GO" id="GO:0046961">
    <property type="term" value="F:proton-transporting ATPase activity, rotational mechanism"/>
    <property type="evidence" value="ECO:0007669"/>
    <property type="project" value="TreeGrafter"/>
</dbReference>
<dbReference type="CDD" id="cd06503">
    <property type="entry name" value="ATP-synt_Fo_b"/>
    <property type="match status" value="1"/>
</dbReference>
<dbReference type="Gene3D" id="1.20.5.620">
    <property type="entry name" value="F1F0 ATP synthase subunit B, membrane domain"/>
    <property type="match status" value="1"/>
</dbReference>
<dbReference type="HAMAP" id="MF_01398">
    <property type="entry name" value="ATP_synth_b_bprime"/>
    <property type="match status" value="1"/>
</dbReference>
<dbReference type="InterPro" id="IPR028987">
    <property type="entry name" value="ATP_synth_B-like_membr_sf"/>
</dbReference>
<dbReference type="InterPro" id="IPR002146">
    <property type="entry name" value="ATP_synth_b/b'su_bac/chlpt"/>
</dbReference>
<dbReference type="InterPro" id="IPR005864">
    <property type="entry name" value="ATP_synth_F0_bsu_bac"/>
</dbReference>
<dbReference type="InterPro" id="IPR050059">
    <property type="entry name" value="ATP_synthase_B_chain"/>
</dbReference>
<dbReference type="NCBIfam" id="TIGR01144">
    <property type="entry name" value="ATP_synt_b"/>
    <property type="match status" value="1"/>
</dbReference>
<dbReference type="NCBIfam" id="NF004411">
    <property type="entry name" value="PRK05759.1-2"/>
    <property type="match status" value="1"/>
</dbReference>
<dbReference type="PANTHER" id="PTHR33445:SF1">
    <property type="entry name" value="ATP SYNTHASE SUBUNIT B"/>
    <property type="match status" value="1"/>
</dbReference>
<dbReference type="PANTHER" id="PTHR33445">
    <property type="entry name" value="ATP SYNTHASE SUBUNIT B', CHLOROPLASTIC"/>
    <property type="match status" value="1"/>
</dbReference>
<dbReference type="Pfam" id="PF00430">
    <property type="entry name" value="ATP-synt_B"/>
    <property type="match status" value="1"/>
</dbReference>
<dbReference type="SUPFAM" id="SSF81573">
    <property type="entry name" value="F1F0 ATP synthase subunit B, membrane domain"/>
    <property type="match status" value="1"/>
</dbReference>
<accession>A1WF54</accession>
<proteinExistence type="inferred from homology"/>